<keyword id="KW-1185">Reference proteome</keyword>
<keyword id="KW-0687">Ribonucleoprotein</keyword>
<keyword id="KW-0689">Ribosomal protein</keyword>
<proteinExistence type="inferred from homology"/>
<accession>A8MI83</accession>
<name>RL35_ALKOO</name>
<feature type="chain" id="PRO_1000060887" description="Large ribosomal subunit protein bL35">
    <location>
        <begin position="1"/>
        <end position="64"/>
    </location>
</feature>
<feature type="region of interest" description="Disordered" evidence="2">
    <location>
        <begin position="1"/>
        <end position="44"/>
    </location>
</feature>
<feature type="compositionally biased region" description="Basic residues" evidence="2">
    <location>
        <begin position="1"/>
        <end position="26"/>
    </location>
</feature>
<feature type="compositionally biased region" description="Basic residues" evidence="2">
    <location>
        <begin position="33"/>
        <end position="44"/>
    </location>
</feature>
<dbReference type="EMBL" id="CP000853">
    <property type="protein sequence ID" value="ABW19515.1"/>
    <property type="molecule type" value="Genomic_DNA"/>
</dbReference>
<dbReference type="RefSeq" id="WP_012159827.1">
    <property type="nucleotide sequence ID" value="NC_009922.1"/>
</dbReference>
<dbReference type="SMR" id="A8MI83"/>
<dbReference type="STRING" id="350688.Clos_1977"/>
<dbReference type="KEGG" id="aoe:Clos_1977"/>
<dbReference type="eggNOG" id="COG0291">
    <property type="taxonomic scope" value="Bacteria"/>
</dbReference>
<dbReference type="HOGENOM" id="CLU_169643_4_3_9"/>
<dbReference type="OrthoDB" id="47476at2"/>
<dbReference type="Proteomes" id="UP000000269">
    <property type="component" value="Chromosome"/>
</dbReference>
<dbReference type="GO" id="GO:0022625">
    <property type="term" value="C:cytosolic large ribosomal subunit"/>
    <property type="evidence" value="ECO:0007669"/>
    <property type="project" value="TreeGrafter"/>
</dbReference>
<dbReference type="GO" id="GO:0003735">
    <property type="term" value="F:structural constituent of ribosome"/>
    <property type="evidence" value="ECO:0007669"/>
    <property type="project" value="InterPro"/>
</dbReference>
<dbReference type="GO" id="GO:0006412">
    <property type="term" value="P:translation"/>
    <property type="evidence" value="ECO:0007669"/>
    <property type="project" value="UniProtKB-UniRule"/>
</dbReference>
<dbReference type="FunFam" id="4.10.410.60:FF:000001">
    <property type="entry name" value="50S ribosomal protein L35"/>
    <property type="match status" value="1"/>
</dbReference>
<dbReference type="Gene3D" id="4.10.410.60">
    <property type="match status" value="1"/>
</dbReference>
<dbReference type="HAMAP" id="MF_00514">
    <property type="entry name" value="Ribosomal_bL35"/>
    <property type="match status" value="1"/>
</dbReference>
<dbReference type="InterPro" id="IPR001706">
    <property type="entry name" value="Ribosomal_bL35"/>
</dbReference>
<dbReference type="InterPro" id="IPR021137">
    <property type="entry name" value="Ribosomal_bL35-like"/>
</dbReference>
<dbReference type="InterPro" id="IPR018265">
    <property type="entry name" value="Ribosomal_bL35_CS"/>
</dbReference>
<dbReference type="InterPro" id="IPR037229">
    <property type="entry name" value="Ribosomal_bL35_sf"/>
</dbReference>
<dbReference type="NCBIfam" id="TIGR00001">
    <property type="entry name" value="rpmI_bact"/>
    <property type="match status" value="1"/>
</dbReference>
<dbReference type="PANTHER" id="PTHR33343">
    <property type="entry name" value="54S RIBOSOMAL PROTEIN BL35M"/>
    <property type="match status" value="1"/>
</dbReference>
<dbReference type="PANTHER" id="PTHR33343:SF1">
    <property type="entry name" value="LARGE RIBOSOMAL SUBUNIT PROTEIN BL35M"/>
    <property type="match status" value="1"/>
</dbReference>
<dbReference type="Pfam" id="PF01632">
    <property type="entry name" value="Ribosomal_L35p"/>
    <property type="match status" value="1"/>
</dbReference>
<dbReference type="PRINTS" id="PR00064">
    <property type="entry name" value="RIBOSOMALL35"/>
</dbReference>
<dbReference type="SUPFAM" id="SSF143034">
    <property type="entry name" value="L35p-like"/>
    <property type="match status" value="1"/>
</dbReference>
<dbReference type="PROSITE" id="PS00936">
    <property type="entry name" value="RIBOSOMAL_L35"/>
    <property type="match status" value="1"/>
</dbReference>
<protein>
    <recommendedName>
        <fullName evidence="1">Large ribosomal subunit protein bL35</fullName>
    </recommendedName>
    <alternativeName>
        <fullName evidence="3">50S ribosomal protein L35</fullName>
    </alternativeName>
</protein>
<organism>
    <name type="scientific">Alkaliphilus oremlandii (strain OhILAs)</name>
    <name type="common">Clostridium oremlandii (strain OhILAs)</name>
    <dbReference type="NCBI Taxonomy" id="350688"/>
    <lineage>
        <taxon>Bacteria</taxon>
        <taxon>Bacillati</taxon>
        <taxon>Bacillota</taxon>
        <taxon>Clostridia</taxon>
        <taxon>Peptostreptococcales</taxon>
        <taxon>Natronincolaceae</taxon>
        <taxon>Alkaliphilus</taxon>
    </lineage>
</organism>
<sequence length="64" mass="7422">MPKMKTHRGAAKRFKKTGTGKIKRSKAYTSHILTKKSPKRKRKLRKAGIVFKGDQRRIAQLLPY</sequence>
<comment type="similarity">
    <text evidence="1">Belongs to the bacterial ribosomal protein bL35 family.</text>
</comment>
<evidence type="ECO:0000255" key="1">
    <source>
        <dbReference type="HAMAP-Rule" id="MF_00514"/>
    </source>
</evidence>
<evidence type="ECO:0000256" key="2">
    <source>
        <dbReference type="SAM" id="MobiDB-lite"/>
    </source>
</evidence>
<evidence type="ECO:0000305" key="3"/>
<gene>
    <name evidence="1" type="primary">rpmI</name>
    <name type="ordered locus">Clos_1977</name>
</gene>
<reference key="1">
    <citation type="submission" date="2007-10" db="EMBL/GenBank/DDBJ databases">
        <title>Complete genome of Alkaliphilus oremlandii OhILAs.</title>
        <authorList>
            <person name="Copeland A."/>
            <person name="Lucas S."/>
            <person name="Lapidus A."/>
            <person name="Barry K."/>
            <person name="Detter J.C."/>
            <person name="Glavina del Rio T."/>
            <person name="Hammon N."/>
            <person name="Israni S."/>
            <person name="Dalin E."/>
            <person name="Tice H."/>
            <person name="Pitluck S."/>
            <person name="Chain P."/>
            <person name="Malfatti S."/>
            <person name="Shin M."/>
            <person name="Vergez L."/>
            <person name="Schmutz J."/>
            <person name="Larimer F."/>
            <person name="Land M."/>
            <person name="Hauser L."/>
            <person name="Kyrpides N."/>
            <person name="Mikhailova N."/>
            <person name="Stolz J.F."/>
            <person name="Dawson A."/>
            <person name="Fisher E."/>
            <person name="Crable B."/>
            <person name="Perera E."/>
            <person name="Lisak J."/>
            <person name="Ranganathan M."/>
            <person name="Basu P."/>
            <person name="Richardson P."/>
        </authorList>
    </citation>
    <scope>NUCLEOTIDE SEQUENCE [LARGE SCALE GENOMIC DNA]</scope>
    <source>
        <strain>OhILAs</strain>
    </source>
</reference>